<gene>
    <name evidence="1" type="primary">hemL2</name>
    <name type="synonym">gsaB</name>
    <name type="ordered locus">SA1681</name>
</gene>
<proteinExistence type="evidence at protein level"/>
<protein>
    <recommendedName>
        <fullName evidence="1">Glutamate-1-semialdehyde 2,1-aminomutase 2</fullName>
        <shortName evidence="1">GSA 2</shortName>
        <ecNumber evidence="1">5.4.3.8</ecNumber>
    </recommendedName>
    <alternativeName>
        <fullName evidence="1">Glutamate-1-semialdehyde aminotransferase 2</fullName>
        <shortName evidence="1">GSA-AT 2</shortName>
    </alternativeName>
</protein>
<name>GSA2_STAAN</name>
<comment type="catalytic activity">
    <reaction evidence="1">
        <text>(S)-4-amino-5-oxopentanoate = 5-aminolevulinate</text>
        <dbReference type="Rhea" id="RHEA:14265"/>
        <dbReference type="ChEBI" id="CHEBI:57501"/>
        <dbReference type="ChEBI" id="CHEBI:356416"/>
        <dbReference type="EC" id="5.4.3.8"/>
    </reaction>
</comment>
<comment type="cofactor">
    <cofactor evidence="1">
        <name>pyridoxal 5'-phosphate</name>
        <dbReference type="ChEBI" id="CHEBI:597326"/>
    </cofactor>
</comment>
<comment type="pathway">
    <text evidence="1">Porphyrin-containing compound metabolism; protoporphyrin-IX biosynthesis; 5-aminolevulinate from L-glutamyl-tRNA(Glu): step 2/2.</text>
</comment>
<comment type="subunit">
    <text evidence="1">Homodimer.</text>
</comment>
<comment type="subcellular location">
    <subcellularLocation>
        <location evidence="1">Cytoplasm</location>
    </subcellularLocation>
</comment>
<comment type="similarity">
    <text evidence="1">Belongs to the class-III pyridoxal-phosphate-dependent aminotransferase family. HemL subfamily.</text>
</comment>
<organism>
    <name type="scientific">Staphylococcus aureus (strain N315)</name>
    <dbReference type="NCBI Taxonomy" id="158879"/>
    <lineage>
        <taxon>Bacteria</taxon>
        <taxon>Bacillati</taxon>
        <taxon>Bacillota</taxon>
        <taxon>Bacilli</taxon>
        <taxon>Bacillales</taxon>
        <taxon>Staphylococcaceae</taxon>
        <taxon>Staphylococcus</taxon>
    </lineage>
</organism>
<dbReference type="EC" id="5.4.3.8" evidence="1"/>
<dbReference type="EMBL" id="BA000018">
    <property type="protein sequence ID" value="BAB42950.1"/>
    <property type="molecule type" value="Genomic_DNA"/>
</dbReference>
<dbReference type="PIR" id="G89973">
    <property type="entry name" value="G89973"/>
</dbReference>
<dbReference type="RefSeq" id="WP_001011595.1">
    <property type="nucleotide sequence ID" value="NC_002745.2"/>
</dbReference>
<dbReference type="SMR" id="Q7A4T5"/>
<dbReference type="EnsemblBacteria" id="BAB42950">
    <property type="protein sequence ID" value="BAB42950"/>
    <property type="gene ID" value="BAB42950"/>
</dbReference>
<dbReference type="KEGG" id="sau:SA1681"/>
<dbReference type="HOGENOM" id="CLU_016922_1_5_9"/>
<dbReference type="UniPathway" id="UPA00251">
    <property type="reaction ID" value="UER00317"/>
</dbReference>
<dbReference type="GO" id="GO:0005737">
    <property type="term" value="C:cytoplasm"/>
    <property type="evidence" value="ECO:0007669"/>
    <property type="project" value="UniProtKB-SubCell"/>
</dbReference>
<dbReference type="GO" id="GO:0042286">
    <property type="term" value="F:glutamate-1-semialdehyde 2,1-aminomutase activity"/>
    <property type="evidence" value="ECO:0007669"/>
    <property type="project" value="UniProtKB-UniRule"/>
</dbReference>
<dbReference type="GO" id="GO:0030170">
    <property type="term" value="F:pyridoxal phosphate binding"/>
    <property type="evidence" value="ECO:0007669"/>
    <property type="project" value="InterPro"/>
</dbReference>
<dbReference type="GO" id="GO:0008483">
    <property type="term" value="F:transaminase activity"/>
    <property type="evidence" value="ECO:0007669"/>
    <property type="project" value="InterPro"/>
</dbReference>
<dbReference type="GO" id="GO:0006782">
    <property type="term" value="P:protoporphyrinogen IX biosynthetic process"/>
    <property type="evidence" value="ECO:0007669"/>
    <property type="project" value="UniProtKB-UniRule"/>
</dbReference>
<dbReference type="CDD" id="cd00610">
    <property type="entry name" value="OAT_like"/>
    <property type="match status" value="1"/>
</dbReference>
<dbReference type="FunFam" id="3.40.640.10:FF:000021">
    <property type="entry name" value="Glutamate-1-semialdehyde 2,1-aminomutase"/>
    <property type="match status" value="1"/>
</dbReference>
<dbReference type="Gene3D" id="3.90.1150.10">
    <property type="entry name" value="Aspartate Aminotransferase, domain 1"/>
    <property type="match status" value="1"/>
</dbReference>
<dbReference type="Gene3D" id="3.40.640.10">
    <property type="entry name" value="Type I PLP-dependent aspartate aminotransferase-like (Major domain)"/>
    <property type="match status" value="1"/>
</dbReference>
<dbReference type="HAMAP" id="MF_00375">
    <property type="entry name" value="HemL_aminotrans_3"/>
    <property type="match status" value="1"/>
</dbReference>
<dbReference type="InterPro" id="IPR004639">
    <property type="entry name" value="4pyrrol_synth_GluAld_NH2Trfase"/>
</dbReference>
<dbReference type="InterPro" id="IPR005814">
    <property type="entry name" value="Aminotrans_3"/>
</dbReference>
<dbReference type="InterPro" id="IPR049704">
    <property type="entry name" value="Aminotrans_3_PPA_site"/>
</dbReference>
<dbReference type="InterPro" id="IPR015424">
    <property type="entry name" value="PyrdxlP-dep_Trfase"/>
</dbReference>
<dbReference type="InterPro" id="IPR015421">
    <property type="entry name" value="PyrdxlP-dep_Trfase_major"/>
</dbReference>
<dbReference type="InterPro" id="IPR015422">
    <property type="entry name" value="PyrdxlP-dep_Trfase_small"/>
</dbReference>
<dbReference type="NCBIfam" id="TIGR00713">
    <property type="entry name" value="hemL"/>
    <property type="match status" value="1"/>
</dbReference>
<dbReference type="NCBIfam" id="NF000818">
    <property type="entry name" value="PRK00062.1"/>
    <property type="match status" value="1"/>
</dbReference>
<dbReference type="NCBIfam" id="NF009055">
    <property type="entry name" value="PRK12389.1"/>
    <property type="match status" value="1"/>
</dbReference>
<dbReference type="PANTHER" id="PTHR43713">
    <property type="entry name" value="GLUTAMATE-1-SEMIALDEHYDE 2,1-AMINOMUTASE"/>
    <property type="match status" value="1"/>
</dbReference>
<dbReference type="PANTHER" id="PTHR43713:SF1">
    <property type="entry name" value="GLUTAMATE-1-SEMIALDEHYDE 2,1-AMINOMUTASE 2"/>
    <property type="match status" value="1"/>
</dbReference>
<dbReference type="Pfam" id="PF00202">
    <property type="entry name" value="Aminotran_3"/>
    <property type="match status" value="1"/>
</dbReference>
<dbReference type="SUPFAM" id="SSF53383">
    <property type="entry name" value="PLP-dependent transferases"/>
    <property type="match status" value="1"/>
</dbReference>
<dbReference type="PROSITE" id="PS00600">
    <property type="entry name" value="AA_TRANSFER_CLASS_3"/>
    <property type="match status" value="1"/>
</dbReference>
<keyword id="KW-0963">Cytoplasm</keyword>
<keyword id="KW-0413">Isomerase</keyword>
<keyword id="KW-0627">Porphyrin biosynthesis</keyword>
<keyword id="KW-0663">Pyridoxal phosphate</keyword>
<reference key="1">
    <citation type="journal article" date="2001" name="Lancet">
        <title>Whole genome sequencing of meticillin-resistant Staphylococcus aureus.</title>
        <authorList>
            <person name="Kuroda M."/>
            <person name="Ohta T."/>
            <person name="Uchiyama I."/>
            <person name="Baba T."/>
            <person name="Yuzawa H."/>
            <person name="Kobayashi I."/>
            <person name="Cui L."/>
            <person name="Oguchi A."/>
            <person name="Aoki K."/>
            <person name="Nagai Y."/>
            <person name="Lian J.-Q."/>
            <person name="Ito T."/>
            <person name="Kanamori M."/>
            <person name="Matsumaru H."/>
            <person name="Maruyama A."/>
            <person name="Murakami H."/>
            <person name="Hosoyama A."/>
            <person name="Mizutani-Ui Y."/>
            <person name="Takahashi N.K."/>
            <person name="Sawano T."/>
            <person name="Inoue R."/>
            <person name="Kaito C."/>
            <person name="Sekimizu K."/>
            <person name="Hirakawa H."/>
            <person name="Kuhara S."/>
            <person name="Goto S."/>
            <person name="Yabuzaki J."/>
            <person name="Kanehisa M."/>
            <person name="Yamashita A."/>
            <person name="Oshima K."/>
            <person name="Furuya K."/>
            <person name="Yoshino C."/>
            <person name="Shiba T."/>
            <person name="Hattori M."/>
            <person name="Ogasawara N."/>
            <person name="Hayashi H."/>
            <person name="Hiramatsu K."/>
        </authorList>
    </citation>
    <scope>NUCLEOTIDE SEQUENCE [LARGE SCALE GENOMIC DNA]</scope>
    <source>
        <strain>N315</strain>
    </source>
</reference>
<reference key="2">
    <citation type="submission" date="2007-10" db="UniProtKB">
        <title>Shotgun proteomic analysis of total and membrane protein extracts of S. aureus strain N315.</title>
        <authorList>
            <person name="Vaezzadeh A.R."/>
            <person name="Deshusses J."/>
            <person name="Lescuyer P."/>
            <person name="Hochstrasser D.F."/>
        </authorList>
    </citation>
    <scope>IDENTIFICATION BY MASS SPECTROMETRY [LARGE SCALE ANALYSIS]</scope>
    <source>
        <strain>N315</strain>
    </source>
</reference>
<sequence length="429" mass="46726">MNFSESERLQQLSNEYILGGVNSPSRSYKAVGGGAPVVMKEGHGAYLYDVDGNKFIDYLQAYGPIIAGHAHPHITKAIQEQAAKGVLFGTPTELEIEFSKKLRDAIPSLEKIRFVNSGTEAVMTTIRVARAYTKRNKIIKFAGSYHGHSDLVLVAAGSGPSQLGSPDSAGVPESVAREVITVPFNDINAYKEAIEFWGDEIAAVLVEPIVGNFGMVMPQPGFLEEVNEISHNNGTLVIYDEVITAFRFHYGAAQDLLGVIPDLTAFGKIVGGGLPIGGYGGRQDIMEQVAPLGPAYQAGTMAGNPLSMKAGIALLEVLEQDGVYEKLDSLGQQLEEGLLKLIEKHNITATINRIYGSLTLYFTDEKVTHYDQVEHSDGEAFGKFFKLMLNQGINLAPSKFEAWFLTTEHTEEDIQQTLKAADYAFSQMK</sequence>
<evidence type="ECO:0000255" key="1">
    <source>
        <dbReference type="HAMAP-Rule" id="MF_00375"/>
    </source>
</evidence>
<accession>Q7A4T5</accession>
<feature type="chain" id="PRO_0000120446" description="Glutamate-1-semialdehyde 2,1-aminomutase 2">
    <location>
        <begin position="1"/>
        <end position="429"/>
    </location>
</feature>
<feature type="modified residue" description="N6-(pyridoxal phosphate)lysine" evidence="1">
    <location>
        <position position="268"/>
    </location>
</feature>